<comment type="function">
    <text evidence="2 3 9">Non-receptor tyrosine kinase which mediates signal transduction downstream of a variety of transmembrane receptors including classical immunoreceptors like the B-cell receptor (BCR). Regulates several biological processes including innate and adaptive immunity, cell adhesion, osteoclast maturation, platelet activation and vascular development. Assembles into signaling complexes with activated receptors at the plasma membrane via interaction between its SH2 domains and the receptor tyrosine-phosphorylated ITAM domains. The association with the receptor can also be indirect and mediated by adapter proteins containing ITAM or partial hemITAM domains. The phosphorylation of the ITAM domains is generally mediated by SRC subfamily kinases upon engagement of the receptor. More rarely signal transduction via SYK could be ITAM-independent. Direct downstream effectors phosphorylated by SYK include DEPTOR, VAV1, PLCG1, PI-3-kinase, LCP2 and BLNK. Initially identified as essential in B-cell receptor (BCR) signaling, it is necessary for the maturation of B-cells most probably at the pro-B to pre-B transition. Activated upon BCR engagement, it phosphorylates and activates BLNK an adapter linking the activated BCR to downstream signaling adapters and effectors. It also phosphorylates and activates PLCG1 and the PKC signaling pathway. It also phosphorylates BTK and regulates its activity in B-cell antigen receptor (BCR)-coupled signaling. In addition to its function downstream of BCR also plays a role in T-cell receptor signaling. Plays also a crucial role in the innate immune response to fungal, bacterial and viral pathogens. It is for instance activated by the membrane lectin CLEC7A. Upon stimulation by fungal proteins, CLEC7A together with SYK activates immune cells inducing the production of ROS. Also activates the inflammasome and NF-kappa-B-mediated transcription of chemokines and cytokines in presence of pathogens. Regulates neutrophil degranulation and phagocytosis through activation of the MAPK signaling cascade. Required for the stimulation of neutrophil phagocytosis by IL15 (By similarity). Also mediates the activation of dendritic cells by cell necrosis stimuli. Also involved in mast cells activation. Involved in interleukin-3/IL3-mediated signaling pathway in basophils (By similarity). Also functions downstream of receptors mediating cell adhesion. Relays for instance, integrin-mediated neutrophils and macrophages activation and P-selectin receptor/SELPG-mediated recruitment of leukocytes to inflammatory loci. Also plays a role in non-immune processes. It is for instance involved in vascular development where it may regulate blood and lymphatic vascular separation. It is also required for osteoclast development and function. Functions in the activation of platelets by collagen, mediating PLCG2 phosphorylation and activation. May be coupled to the collagen receptor by the ITAM domain-containing FCER1G. Also activated by the membrane lectin CLEC1B that is required for activation of platelets by PDPN/podoplanin. Involved in platelet adhesion being activated by ITGB3 engaged by fibrinogen. Together with CEACAM20, enhances production of the cytokine CXCL8/IL-8 via the NFKB pathway and may thus have a role in the intestinal immune response (By similarity).</text>
</comment>
<comment type="catalytic activity">
    <reaction evidence="6">
        <text>L-tyrosyl-[protein] + ATP = O-phospho-L-tyrosyl-[protein] + ADP + H(+)</text>
        <dbReference type="Rhea" id="RHEA:10596"/>
        <dbReference type="Rhea" id="RHEA-COMP:10136"/>
        <dbReference type="Rhea" id="RHEA-COMP:20101"/>
        <dbReference type="ChEBI" id="CHEBI:15378"/>
        <dbReference type="ChEBI" id="CHEBI:30616"/>
        <dbReference type="ChEBI" id="CHEBI:46858"/>
        <dbReference type="ChEBI" id="CHEBI:61978"/>
        <dbReference type="ChEBI" id="CHEBI:456216"/>
        <dbReference type="EC" id="2.7.10.2"/>
    </reaction>
</comment>
<comment type="activity regulation">
    <text evidence="1">Autoinhibited. Intramolecular binding of the interdomains A and B (also called linker region) to parts of the catalytic domain keep the catalytic center in an inactive conformation. The phosphorylation of the interdomains or the binding of the SH2 domains with dually phosphorylated ITAM domains on transmembrane proteins disrupt those intramolecular interactions allowing the kinase domain to adopt an active conformation. The phosphorylation of SYK and of the ITAM domains which is responsible for SYK activation is essentially mediated by SRC subfamily kinases, like LYN, upon transmembrane receptors engagement. May also be negatively regulated by PTPN6 through dephosphorylation. Downstream signaling adapters and intermediates like BLNK or RHOH may mediate positive and/or negative feedback regulation. Negatively regulated by CBL and CBLB through ubiquitination and probable degradation (By similarity). Phosphorylates SH3BP2 which in turn may regulate SYK through LYN (By similarity).</text>
</comment>
<comment type="subunit">
    <text evidence="2 3">Interacts with LYN; phosphorylates SYK. Interacts with RHOH (phosphorylated); regulates mast cells activation. Interacts with NFAM1 (phosphorylated); probably involved in BCR signaling. Interacts with VAV1 (via SH2 domain); phosphorylates VAV1 upon BCR activation. Interacts with GAB2 (phosphorylated); probably involved in IgE Fc receptor signaling. Interacts (via its SH2 domains) with CD79A (via its phosphorylated ITAM domain); the interaction stimulates SYK autophosphorylation and activation. Interacts (via SH2 domains) with FCER1G (via ITAM domain); activates SYK and mediates neutrophils and macrophages integrin-mediated activation. Interaction with FCER1G in basophils triggers IL3-induced IL4 production (By similarity). Interacts with ITGB2 and FGR; involved in ITGB2 downstream signaling. Interacts with ITGB3; upon activation by ITGB3 promotes platelet adhesion. Interacts (via SH2 domains) with TYROBP (via ITAM domain); involved in neutrophils and macrophages integrin-mediated activation. Interacts with MSN and SELPLG; mediates the selectin-dependent activation of SYK by SELPLG. Interacts with BLNK (via SH2 domain). Interacts (via the second SH2 domain) with USP25 (via C-terminus); phosphorylates USP25 and regulates USP25 intracellular levels. Interacts (via SH2 domains) with CLEC1B (dimer). Interacts with CLEC7A; participates in leukocyte activation in presence of fungal pathogens. Interacts (phosphorylated) with SLA; may regulate SYK through CBL recruitment. Interacts with YWHAG; attenuates BCR-induced membrane translocation and activation of SYK (By similarity). Interacts (via SH2 domains) with GCSAM; the interaction increases after B-cell receptor stimulation, resulting in enhanced SYK autophosphorylation and activity (By similarity). Interacts with TNS2; leading to the phosphorylation of SYK (By similarity). Interacts with FLNA (via filamin repeat 5); docks SYK to the plasma membrane (By similarity). Interacts with CEACAM1; lipopolysaccharide activated neutrophils induce phosphorylation of SYK resulting in the formation of a complex including TLR4, phosphorylated form of SYK and CEACAM1, which in turn, recruits PTPN6 that dephosphorylates SYK, reducing the production of reactive oxygen species (ROS) and lysosome disruption, leading to a reduction of the inflammasome activity (By similarity). Interacts (via SH2 domains) with CEACAM20 (phosphorylated form); the interaction further enhances CEACAM20 phosphorylation (By similarity). Interacts with IL15RA (By similarity). Interacts with MPL/TPOR; this interaction negatively regulates THPO-mediated ERK1/2 signaling (By similarity).</text>
</comment>
<comment type="subcellular location">
    <subcellularLocation>
        <location evidence="10">Cell membrane</location>
    </subcellularLocation>
    <subcellularLocation>
        <location evidence="10">Cytoplasm</location>
        <location evidence="10">Cytosol</location>
    </subcellularLocation>
</comment>
<comment type="alternative products">
    <event type="alternative splicing"/>
    <isoform>
        <id>Q64725-1</id>
        <name>SykB</name>
        <sequence type="displayed"/>
    </isoform>
    <isoform>
        <id>Q64725-2</id>
        <name>SykA</name>
        <sequence type="described" ref="VSP_005011"/>
    </isoform>
</comment>
<comment type="domain">
    <text evidence="1">The SH2 domains mediate the interaction of SYK with the phosphorylated ITAM domains of transmembrane proteins. Some proteins like CLEC1B have a partial ITAM domain (also called hemITAM) containing a single YxxL motif. The interaction with SYK requires CLEC1B homodimerization (By similarity).</text>
</comment>
<comment type="PTM">
    <text evidence="1 2">Autophosphorylated. Phosphorylated on tyrosine residues by LYN following receptors engagement. Phosphorylation on Tyr-317 creates a binding site for CBL, an adapter protein that serves as a negative regulator of BCR-stimulated calcium ion signaling (By similarity). Phosphorylation at Tyr-342 creates a binding site for VAV1 (By similarity). Phosphorylation on Tyr-342 and Tyr-346 enhances the phosphorylation and activation of phospholipase C-gamma and the early phase of calcium ion mobilization via a phosphoinositide 3-kinase-independent pathway (By similarity). Phosphorylated on tyrosine residues in response to IL15 (By similarity). Phosphorylation on Ser-291 is very common, it peaks 5 minutes after BCR stimulation, and creates a binding site for YWHAG (By similarity). Phosphorylation at Tyr-624 creates a binding site for BLNK (By similarity). Dephosphorylated by PTPN6 (By similarity).</text>
</comment>
<comment type="PTM">
    <text evidence="1">Ubiquitinated by CBLB after BCR activation; which promotes proteasomal degradation.</text>
</comment>
<comment type="similarity">
    <text evidence="4">Belongs to the protein kinase superfamily. Tyr protein kinase family. SYK/ZAP-70 subfamily.</text>
</comment>
<reference key="1">
    <citation type="journal article" date="1995" name="J. Biol. Chem.">
        <title>Molecular cloning of rodent p72Syk. Evidence of alternative mRNA splicing.</title>
        <authorList>
            <person name="Rowley R.B."/>
            <person name="Bolen J.B."/>
            <person name="Fargnoli J."/>
        </authorList>
    </citation>
    <scope>NUCLEOTIDE SEQUENCE [MRNA]</scope>
    <scope>ALTERNATIVE SPLICING (ISOFORMS SYKA AND SYKB)</scope>
</reference>
<reference key="2">
    <citation type="journal article" date="1996" name="Biochemistry">
        <title>SH2 domains mediate the sequential phosphorylation of HS1 protein by p72syk and Src-related protein tyrosine kinases.</title>
        <authorList>
            <person name="Ruzzene M."/>
            <person name="Brunati A.M."/>
            <person name="Marin O."/>
            <person name="Donella-Deana A."/>
            <person name="Pinna L.A."/>
        </authorList>
    </citation>
    <scope>FUNCTION IN PHOSPHORYLATION OF HCLS1</scope>
</reference>
<reference key="3">
    <citation type="journal article" date="2002" name="J. Biol. Chem.">
        <title>Regulation of signaling in B cells through the phosphorylation of Syk on linker region tyrosines. A mechanism for negative signaling by the Lyn tyrosine kinase.</title>
        <authorList>
            <person name="Hong J.J."/>
            <person name="Yankee T.M."/>
            <person name="Harrison M.L."/>
            <person name="Geahlen R.L."/>
        </authorList>
    </citation>
    <scope>PHOSPHORYLATION AT TYR-317 BY LYN</scope>
    <scope>PHOSPHORYLATION AT TYR-342 AND TYR-346</scope>
</reference>
<organism>
    <name type="scientific">Rattus norvegicus</name>
    <name type="common">Rat</name>
    <dbReference type="NCBI Taxonomy" id="10116"/>
    <lineage>
        <taxon>Eukaryota</taxon>
        <taxon>Metazoa</taxon>
        <taxon>Chordata</taxon>
        <taxon>Craniata</taxon>
        <taxon>Vertebrata</taxon>
        <taxon>Euteleostomi</taxon>
        <taxon>Mammalia</taxon>
        <taxon>Eutheria</taxon>
        <taxon>Euarchontoglires</taxon>
        <taxon>Glires</taxon>
        <taxon>Rodentia</taxon>
        <taxon>Myomorpha</taxon>
        <taxon>Muroidea</taxon>
        <taxon>Muridae</taxon>
        <taxon>Murinae</taxon>
        <taxon>Rattus</taxon>
    </lineage>
</organism>
<keyword id="KW-1064">Adaptive immunity</keyword>
<keyword id="KW-0025">Alternative splicing</keyword>
<keyword id="KW-0037">Angiogenesis</keyword>
<keyword id="KW-0067">ATP-binding</keyword>
<keyword id="KW-1003">Cell membrane</keyword>
<keyword id="KW-0963">Cytoplasm</keyword>
<keyword id="KW-0391">Immunity</keyword>
<keyword id="KW-0399">Innate immunity</keyword>
<keyword id="KW-0418">Kinase</keyword>
<keyword id="KW-0472">Membrane</keyword>
<keyword id="KW-0547">Nucleotide-binding</keyword>
<keyword id="KW-0597">Phosphoprotein</keyword>
<keyword id="KW-1185">Reference proteome</keyword>
<keyword id="KW-0677">Repeat</keyword>
<keyword id="KW-0727">SH2 domain</keyword>
<keyword id="KW-0808">Transferase</keyword>
<keyword id="KW-0829">Tyrosine-protein kinase</keyword>
<keyword id="KW-0832">Ubl conjugation</keyword>
<protein>
    <recommendedName>
        <fullName>Tyrosine-protein kinase SYK</fullName>
        <ecNumber>2.7.10.2</ecNumber>
    </recommendedName>
    <alternativeName>
        <fullName>Spleen tyrosine kinase</fullName>
    </alternativeName>
    <alternativeName>
        <fullName>p72Syk</fullName>
    </alternativeName>
</protein>
<dbReference type="EC" id="2.7.10.2"/>
<dbReference type="EMBL" id="U21684">
    <property type="protein sequence ID" value="AAA75167.1"/>
    <property type="molecule type" value="mRNA"/>
</dbReference>
<dbReference type="EMBL" id="U21683">
    <property type="protein sequence ID" value="AAA75166.1"/>
    <property type="molecule type" value="mRNA"/>
</dbReference>
<dbReference type="RefSeq" id="NP_036890.1">
    <property type="nucleotide sequence ID" value="NM_012758.1"/>
</dbReference>
<dbReference type="SMR" id="Q64725"/>
<dbReference type="BioGRID" id="247220">
    <property type="interactions" value="2"/>
</dbReference>
<dbReference type="CORUM" id="Q64725"/>
<dbReference type="FunCoup" id="Q64725">
    <property type="interactions" value="629"/>
</dbReference>
<dbReference type="IntAct" id="Q64725">
    <property type="interactions" value="16"/>
</dbReference>
<dbReference type="STRING" id="10116.ENSRNOP00000016942"/>
<dbReference type="BindingDB" id="Q64725"/>
<dbReference type="ChEMBL" id="CHEMBL4364"/>
<dbReference type="iPTMnet" id="Q64725"/>
<dbReference type="PhosphoSitePlus" id="Q64725"/>
<dbReference type="PaxDb" id="10116-ENSRNOP00000016942"/>
<dbReference type="GeneID" id="25155"/>
<dbReference type="KEGG" id="rno:25155"/>
<dbReference type="AGR" id="RGD:3796"/>
<dbReference type="CTD" id="6850"/>
<dbReference type="RGD" id="3796">
    <property type="gene designation" value="Syk"/>
</dbReference>
<dbReference type="eggNOG" id="ENOG502QT06">
    <property type="taxonomic scope" value="Eukaryota"/>
</dbReference>
<dbReference type="InParanoid" id="Q64725"/>
<dbReference type="PhylomeDB" id="Q64725"/>
<dbReference type="BRENDA" id="2.7.10.2">
    <property type="organism ID" value="5301"/>
</dbReference>
<dbReference type="Reactome" id="R-RNO-114604">
    <property type="pathway name" value="GPVI-mediated activation cascade"/>
</dbReference>
<dbReference type="Reactome" id="R-RNO-2029481">
    <property type="pathway name" value="FCGR activation"/>
</dbReference>
<dbReference type="Reactome" id="R-RNO-2029482">
    <property type="pathway name" value="Regulation of actin dynamics for phagocytic cup formation"/>
</dbReference>
<dbReference type="Reactome" id="R-RNO-2029485">
    <property type="pathway name" value="Role of phospholipids in phagocytosis"/>
</dbReference>
<dbReference type="Reactome" id="R-RNO-2424491">
    <property type="pathway name" value="DAP12 signaling"/>
</dbReference>
<dbReference type="Reactome" id="R-RNO-2454202">
    <property type="pathway name" value="Fc epsilon receptor (FCERI) signaling"/>
</dbReference>
<dbReference type="Reactome" id="R-RNO-2730905">
    <property type="pathway name" value="Role of LAT2/NTAL/LAB on calcium mobilization"/>
</dbReference>
<dbReference type="Reactome" id="R-RNO-2871796">
    <property type="pathway name" value="FCERI mediated MAPK activation"/>
</dbReference>
<dbReference type="Reactome" id="R-RNO-2871809">
    <property type="pathway name" value="FCERI mediated Ca+2 mobilization"/>
</dbReference>
<dbReference type="Reactome" id="R-RNO-354192">
    <property type="pathway name" value="Integrin signaling"/>
</dbReference>
<dbReference type="Reactome" id="R-RNO-5621480">
    <property type="pathway name" value="Dectin-2 family"/>
</dbReference>
<dbReference type="Reactome" id="R-RNO-9020558">
    <property type="pathway name" value="Interleukin-2 signaling"/>
</dbReference>
<dbReference type="Reactome" id="R-RNO-912631">
    <property type="pathway name" value="Regulation of signaling by CBL"/>
</dbReference>
<dbReference type="Reactome" id="R-RNO-9674555">
    <property type="pathway name" value="Signaling by CSF3 (G-CSF)"/>
</dbReference>
<dbReference type="Reactome" id="R-RNO-9705462">
    <property type="pathway name" value="Inactivation of CSF3 (G-CSF) signaling"/>
</dbReference>
<dbReference type="Reactome" id="R-RNO-983695">
    <property type="pathway name" value="Antigen activates B Cell Receptor (BCR) leading to generation of second messengers"/>
</dbReference>
<dbReference type="PRO" id="PR:Q64725"/>
<dbReference type="Proteomes" id="UP000002494">
    <property type="component" value="Unplaced"/>
</dbReference>
<dbReference type="GO" id="GO:0019815">
    <property type="term" value="C:B cell receptor complex"/>
    <property type="evidence" value="ECO:0000266"/>
    <property type="project" value="RGD"/>
</dbReference>
<dbReference type="GO" id="GO:0005737">
    <property type="term" value="C:cytoplasm"/>
    <property type="evidence" value="ECO:0000266"/>
    <property type="project" value="RGD"/>
</dbReference>
<dbReference type="GO" id="GO:0005829">
    <property type="term" value="C:cytosol"/>
    <property type="evidence" value="ECO:0000304"/>
    <property type="project" value="Reactome"/>
</dbReference>
<dbReference type="GO" id="GO:0032009">
    <property type="term" value="C:early phagosome"/>
    <property type="evidence" value="ECO:0000250"/>
    <property type="project" value="UniProtKB"/>
</dbReference>
<dbReference type="GO" id="GO:0005634">
    <property type="term" value="C:nucleus"/>
    <property type="evidence" value="ECO:0000266"/>
    <property type="project" value="RGD"/>
</dbReference>
<dbReference type="GO" id="GO:0005886">
    <property type="term" value="C:plasma membrane"/>
    <property type="evidence" value="ECO:0000318"/>
    <property type="project" value="GO_Central"/>
</dbReference>
<dbReference type="GO" id="GO:0032991">
    <property type="term" value="C:protein-containing complex"/>
    <property type="evidence" value="ECO:0000266"/>
    <property type="project" value="RGD"/>
</dbReference>
<dbReference type="GO" id="GO:0042101">
    <property type="term" value="C:T cell receptor complex"/>
    <property type="evidence" value="ECO:0000266"/>
    <property type="project" value="RGD"/>
</dbReference>
<dbReference type="GO" id="GO:0005524">
    <property type="term" value="F:ATP binding"/>
    <property type="evidence" value="ECO:0000266"/>
    <property type="project" value="RGD"/>
</dbReference>
<dbReference type="GO" id="GO:0005178">
    <property type="term" value="F:integrin binding"/>
    <property type="evidence" value="ECO:0000266"/>
    <property type="project" value="RGD"/>
</dbReference>
<dbReference type="GO" id="GO:0016170">
    <property type="term" value="F:interleukin-15 receptor binding"/>
    <property type="evidence" value="ECO:0000266"/>
    <property type="project" value="RGD"/>
</dbReference>
<dbReference type="GO" id="GO:0016301">
    <property type="term" value="F:kinase activity"/>
    <property type="evidence" value="ECO:0000266"/>
    <property type="project" value="RGD"/>
</dbReference>
<dbReference type="GO" id="GO:0004715">
    <property type="term" value="F:non-membrane spanning protein tyrosine kinase activity"/>
    <property type="evidence" value="ECO:0000250"/>
    <property type="project" value="UniProtKB"/>
</dbReference>
<dbReference type="GO" id="GO:0019902">
    <property type="term" value="F:phosphatase binding"/>
    <property type="evidence" value="ECO:0000266"/>
    <property type="project" value="RGD"/>
</dbReference>
<dbReference type="GO" id="GO:0043274">
    <property type="term" value="F:phospholipase binding"/>
    <property type="evidence" value="ECO:0000266"/>
    <property type="project" value="RGD"/>
</dbReference>
<dbReference type="GO" id="GO:0001784">
    <property type="term" value="F:phosphotyrosine residue binding"/>
    <property type="evidence" value="ECO:0000266"/>
    <property type="project" value="RGD"/>
</dbReference>
<dbReference type="GO" id="GO:0019904">
    <property type="term" value="F:protein domain specific binding"/>
    <property type="evidence" value="ECO:0000314"/>
    <property type="project" value="RGD"/>
</dbReference>
<dbReference type="GO" id="GO:0004672">
    <property type="term" value="F:protein kinase activity"/>
    <property type="evidence" value="ECO:0000314"/>
    <property type="project" value="RGD"/>
</dbReference>
<dbReference type="GO" id="GO:0019901">
    <property type="term" value="F:protein kinase binding"/>
    <property type="evidence" value="ECO:0000266"/>
    <property type="project" value="RGD"/>
</dbReference>
<dbReference type="GO" id="GO:0004674">
    <property type="term" value="F:protein serine/threonine kinase activity"/>
    <property type="evidence" value="ECO:0000266"/>
    <property type="project" value="RGD"/>
</dbReference>
<dbReference type="GO" id="GO:0004713">
    <property type="term" value="F:protein tyrosine kinase activity"/>
    <property type="evidence" value="ECO:0000269"/>
    <property type="project" value="Reactome"/>
</dbReference>
<dbReference type="GO" id="GO:0097110">
    <property type="term" value="F:scaffold protein binding"/>
    <property type="evidence" value="ECO:0000266"/>
    <property type="project" value="RGD"/>
</dbReference>
<dbReference type="GO" id="GO:0042169">
    <property type="term" value="F:SH2 domain binding"/>
    <property type="evidence" value="ECO:0000266"/>
    <property type="project" value="RGD"/>
</dbReference>
<dbReference type="GO" id="GO:0005102">
    <property type="term" value="F:signaling receptor binding"/>
    <property type="evidence" value="ECO:0000266"/>
    <property type="project" value="RGD"/>
</dbReference>
<dbReference type="GO" id="GO:0035325">
    <property type="term" value="F:Toll-like receptor binding"/>
    <property type="evidence" value="ECO:0000266"/>
    <property type="project" value="RGD"/>
</dbReference>
<dbReference type="GO" id="GO:0031625">
    <property type="term" value="F:ubiquitin protein ligase binding"/>
    <property type="evidence" value="ECO:0000353"/>
    <property type="project" value="RGD"/>
</dbReference>
<dbReference type="GO" id="GO:0002250">
    <property type="term" value="P:adaptive immune response"/>
    <property type="evidence" value="ECO:0000250"/>
    <property type="project" value="UniProtKB"/>
</dbReference>
<dbReference type="GO" id="GO:0097242">
    <property type="term" value="P:amyloid-beta clearance"/>
    <property type="evidence" value="ECO:0000266"/>
    <property type="project" value="RGD"/>
</dbReference>
<dbReference type="GO" id="GO:0001525">
    <property type="term" value="P:angiogenesis"/>
    <property type="evidence" value="ECO:0007669"/>
    <property type="project" value="UniProtKB-KW"/>
</dbReference>
<dbReference type="GO" id="GO:0097190">
    <property type="term" value="P:apoptotic signaling pathway"/>
    <property type="evidence" value="ECO:0000266"/>
    <property type="project" value="RGD"/>
</dbReference>
<dbReference type="GO" id="GO:0030183">
    <property type="term" value="P:B cell differentiation"/>
    <property type="evidence" value="ECO:0000266"/>
    <property type="project" value="RGD"/>
</dbReference>
<dbReference type="GO" id="GO:0050853">
    <property type="term" value="P:B cell receptor signaling pathway"/>
    <property type="evidence" value="ECO:0000250"/>
    <property type="project" value="UniProtKB"/>
</dbReference>
<dbReference type="GO" id="GO:0043366">
    <property type="term" value="P:beta selection"/>
    <property type="evidence" value="ECO:0000266"/>
    <property type="project" value="RGD"/>
</dbReference>
<dbReference type="GO" id="GO:0048514">
    <property type="term" value="P:blood vessel morphogenesis"/>
    <property type="evidence" value="ECO:0000250"/>
    <property type="project" value="UniProtKB"/>
</dbReference>
<dbReference type="GO" id="GO:0019722">
    <property type="term" value="P:calcium-mediated signaling"/>
    <property type="evidence" value="ECO:0000266"/>
    <property type="project" value="RGD"/>
</dbReference>
<dbReference type="GO" id="GO:0001775">
    <property type="term" value="P:cell activation"/>
    <property type="evidence" value="ECO:0000266"/>
    <property type="project" value="RGD"/>
</dbReference>
<dbReference type="GO" id="GO:0002752">
    <property type="term" value="P:cell surface pattern recognition receptor signaling pathway"/>
    <property type="evidence" value="ECO:0000266"/>
    <property type="project" value="RGD"/>
</dbReference>
<dbReference type="GO" id="GO:0007166">
    <property type="term" value="P:cell surface receptor signaling pathway"/>
    <property type="evidence" value="ECO:0000266"/>
    <property type="project" value="RGD"/>
</dbReference>
<dbReference type="GO" id="GO:1904646">
    <property type="term" value="P:cellular response to amyloid-beta"/>
    <property type="evidence" value="ECO:0000266"/>
    <property type="project" value="RGD"/>
</dbReference>
<dbReference type="GO" id="GO:1990858">
    <property type="term" value="P:cellular response to lectin"/>
    <property type="evidence" value="ECO:0000266"/>
    <property type="project" value="RGD"/>
</dbReference>
<dbReference type="GO" id="GO:0071396">
    <property type="term" value="P:cellular response to lipid"/>
    <property type="evidence" value="ECO:0000266"/>
    <property type="project" value="RGD"/>
</dbReference>
<dbReference type="GO" id="GO:0071404">
    <property type="term" value="P:cellular response to low-density lipoprotein particle stimulus"/>
    <property type="evidence" value="ECO:0000250"/>
    <property type="project" value="UniProtKB"/>
</dbReference>
<dbReference type="GO" id="GO:0071226">
    <property type="term" value="P:cellular response to molecule of fungal origin"/>
    <property type="evidence" value="ECO:0000250"/>
    <property type="project" value="UniProtKB"/>
</dbReference>
<dbReference type="GO" id="GO:0038063">
    <property type="term" value="P:collagen-activated tyrosine kinase receptor signaling pathway"/>
    <property type="evidence" value="ECO:0000266"/>
    <property type="project" value="RGD"/>
</dbReference>
<dbReference type="GO" id="GO:0042742">
    <property type="term" value="P:defense response to bacterium"/>
    <property type="evidence" value="ECO:0000250"/>
    <property type="project" value="UniProtKB"/>
</dbReference>
<dbReference type="GO" id="GO:0007167">
    <property type="term" value="P:enzyme-linked receptor protein signaling pathway"/>
    <property type="evidence" value="ECO:0000266"/>
    <property type="project" value="RGD"/>
</dbReference>
<dbReference type="GO" id="GO:0051649">
    <property type="term" value="P:establishment of localization in cell"/>
    <property type="evidence" value="ECO:0000266"/>
    <property type="project" value="RGD"/>
</dbReference>
<dbReference type="GO" id="GO:0042492">
    <property type="term" value="P:gamma-delta T cell differentiation"/>
    <property type="evidence" value="ECO:0000266"/>
    <property type="project" value="RGD"/>
</dbReference>
<dbReference type="GO" id="GO:0045087">
    <property type="term" value="P:innate immune response"/>
    <property type="evidence" value="ECO:0000250"/>
    <property type="project" value="UniProtKB"/>
</dbReference>
<dbReference type="GO" id="GO:0007229">
    <property type="term" value="P:integrin-mediated signaling pathway"/>
    <property type="evidence" value="ECO:0000250"/>
    <property type="project" value="UniProtKB"/>
</dbReference>
<dbReference type="GO" id="GO:0038156">
    <property type="term" value="P:interleukin-3-mediated signaling pathway"/>
    <property type="evidence" value="ECO:0000250"/>
    <property type="project" value="UniProtKB"/>
</dbReference>
<dbReference type="GO" id="GO:0035556">
    <property type="term" value="P:intracellular signal transduction"/>
    <property type="evidence" value="ECO:0000266"/>
    <property type="project" value="RGD"/>
</dbReference>
<dbReference type="GO" id="GO:0002366">
    <property type="term" value="P:leukocyte activation involved in immune response"/>
    <property type="evidence" value="ECO:0000250"/>
    <property type="project" value="UniProtKB"/>
</dbReference>
<dbReference type="GO" id="GO:0007159">
    <property type="term" value="P:leukocyte cell-cell adhesion"/>
    <property type="evidence" value="ECO:0000250"/>
    <property type="project" value="UniProtKB"/>
</dbReference>
<dbReference type="GO" id="GO:0019370">
    <property type="term" value="P:leukotriene biosynthetic process"/>
    <property type="evidence" value="ECO:0000266"/>
    <property type="project" value="RGD"/>
</dbReference>
<dbReference type="GO" id="GO:0001945">
    <property type="term" value="P:lymph vessel development"/>
    <property type="evidence" value="ECO:0000250"/>
    <property type="project" value="UniProtKB"/>
</dbReference>
<dbReference type="GO" id="GO:0002281">
    <property type="term" value="P:macrophage activation involved in immune response"/>
    <property type="evidence" value="ECO:0000250"/>
    <property type="project" value="UniProtKB"/>
</dbReference>
<dbReference type="GO" id="GO:0043303">
    <property type="term" value="P:mast cell degranulation"/>
    <property type="evidence" value="ECO:0000266"/>
    <property type="project" value="RGD"/>
</dbReference>
<dbReference type="GO" id="GO:0002283">
    <property type="term" value="P:neutrophil activation involved in immune response"/>
    <property type="evidence" value="ECO:0000250"/>
    <property type="project" value="UniProtKB"/>
</dbReference>
<dbReference type="GO" id="GO:0030593">
    <property type="term" value="P:neutrophil chemotaxis"/>
    <property type="evidence" value="ECO:0000250"/>
    <property type="project" value="UniProtKB"/>
</dbReference>
<dbReference type="GO" id="GO:0018108">
    <property type="term" value="P:peptidyl-tyrosine phosphorylation"/>
    <property type="evidence" value="ECO:0000250"/>
    <property type="project" value="UniProtKB"/>
</dbReference>
<dbReference type="GO" id="GO:0046638">
    <property type="term" value="P:positive regulation of alpha-beta T cell differentiation"/>
    <property type="evidence" value="ECO:0000266"/>
    <property type="project" value="RGD"/>
</dbReference>
<dbReference type="GO" id="GO:0046641">
    <property type="term" value="P:positive regulation of alpha-beta T cell proliferation"/>
    <property type="evidence" value="ECO:0000266"/>
    <property type="project" value="RGD"/>
</dbReference>
<dbReference type="GO" id="GO:0045579">
    <property type="term" value="P:positive regulation of B cell differentiation"/>
    <property type="evidence" value="ECO:0000266"/>
    <property type="project" value="RGD"/>
</dbReference>
<dbReference type="GO" id="GO:0045780">
    <property type="term" value="P:positive regulation of bone resorption"/>
    <property type="evidence" value="ECO:0000250"/>
    <property type="project" value="UniProtKB"/>
</dbReference>
<dbReference type="GO" id="GO:0050850">
    <property type="term" value="P:positive regulation of calcium-mediated signaling"/>
    <property type="evidence" value="ECO:0000266"/>
    <property type="project" value="RGD"/>
</dbReference>
<dbReference type="GO" id="GO:0033630">
    <property type="term" value="P:positive regulation of cell adhesion mediated by integrin"/>
    <property type="evidence" value="ECO:0000250"/>
    <property type="project" value="UniProtKB"/>
</dbReference>
<dbReference type="GO" id="GO:0120162">
    <property type="term" value="P:positive regulation of cold-induced thermogenesis"/>
    <property type="evidence" value="ECO:0000250"/>
    <property type="project" value="YuBioLab"/>
</dbReference>
<dbReference type="GO" id="GO:0001819">
    <property type="term" value="P:positive regulation of cytokine production"/>
    <property type="evidence" value="ECO:0000266"/>
    <property type="project" value="RGD"/>
</dbReference>
<dbReference type="GO" id="GO:0045588">
    <property type="term" value="P:positive regulation of gamma-delta T cell differentiation"/>
    <property type="evidence" value="ECO:0000266"/>
    <property type="project" value="RGD"/>
</dbReference>
<dbReference type="GO" id="GO:0032725">
    <property type="term" value="P:positive regulation of granulocyte macrophage colony-stimulating factor production"/>
    <property type="evidence" value="ECO:0000266"/>
    <property type="project" value="RGD"/>
</dbReference>
<dbReference type="GO" id="GO:0032733">
    <property type="term" value="P:positive regulation of interleukin-10 production"/>
    <property type="evidence" value="ECO:0000266"/>
    <property type="project" value="RGD"/>
</dbReference>
<dbReference type="GO" id="GO:0032735">
    <property type="term" value="P:positive regulation of interleukin-12 production"/>
    <property type="evidence" value="ECO:0000266"/>
    <property type="project" value="RGD"/>
</dbReference>
<dbReference type="GO" id="GO:0032752">
    <property type="term" value="P:positive regulation of interleukin-3 production"/>
    <property type="evidence" value="ECO:0000266"/>
    <property type="project" value="RGD"/>
</dbReference>
<dbReference type="GO" id="GO:0032753">
    <property type="term" value="P:positive regulation of interleukin-4 production"/>
    <property type="evidence" value="ECO:0000250"/>
    <property type="project" value="UniProtKB"/>
</dbReference>
<dbReference type="GO" id="GO:0032755">
    <property type="term" value="P:positive regulation of interleukin-6 production"/>
    <property type="evidence" value="ECO:0000266"/>
    <property type="project" value="RGD"/>
</dbReference>
<dbReference type="GO" id="GO:0032757">
    <property type="term" value="P:positive regulation of interleukin-8 production"/>
    <property type="evidence" value="ECO:0000266"/>
    <property type="project" value="RGD"/>
</dbReference>
<dbReference type="GO" id="GO:0043410">
    <property type="term" value="P:positive regulation of MAPK cascade"/>
    <property type="evidence" value="ECO:0000266"/>
    <property type="project" value="RGD"/>
</dbReference>
<dbReference type="GO" id="GO:0032765">
    <property type="term" value="P:positive regulation of mast cell cytokine production"/>
    <property type="evidence" value="ECO:0000266"/>
    <property type="project" value="RGD"/>
</dbReference>
<dbReference type="GO" id="GO:0043306">
    <property type="term" value="P:positive regulation of mast cell degranulation"/>
    <property type="evidence" value="ECO:0000315"/>
    <property type="project" value="RGD"/>
</dbReference>
<dbReference type="GO" id="GO:0071639">
    <property type="term" value="P:positive regulation of monocyte chemotactic protein-1 production"/>
    <property type="evidence" value="ECO:0000266"/>
    <property type="project" value="RGD"/>
</dbReference>
<dbReference type="GO" id="GO:0031334">
    <property type="term" value="P:positive regulation of protein-containing complex assembly"/>
    <property type="evidence" value="ECO:0000266"/>
    <property type="project" value="RGD"/>
</dbReference>
<dbReference type="GO" id="GO:0002092">
    <property type="term" value="P:positive regulation of receptor internalization"/>
    <property type="evidence" value="ECO:0000266"/>
    <property type="project" value="RGD"/>
</dbReference>
<dbReference type="GO" id="GO:0032930">
    <property type="term" value="P:positive regulation of superoxide anion generation"/>
    <property type="evidence" value="ECO:0000266"/>
    <property type="project" value="RGD"/>
</dbReference>
<dbReference type="GO" id="GO:1904263">
    <property type="term" value="P:positive regulation of TORC1 signaling"/>
    <property type="evidence" value="ECO:0000266"/>
    <property type="project" value="RGD"/>
</dbReference>
<dbReference type="GO" id="GO:0032760">
    <property type="term" value="P:positive regulation of tumor necrosis factor production"/>
    <property type="evidence" value="ECO:0000266"/>
    <property type="project" value="RGD"/>
</dbReference>
<dbReference type="GO" id="GO:0032481">
    <property type="term" value="P:positive regulation of type I interferon production"/>
    <property type="evidence" value="ECO:0000266"/>
    <property type="project" value="RGD"/>
</dbReference>
<dbReference type="GO" id="GO:0006606">
    <property type="term" value="P:protein import into nucleus"/>
    <property type="evidence" value="ECO:0000266"/>
    <property type="project" value="RGD"/>
</dbReference>
<dbReference type="GO" id="GO:0031623">
    <property type="term" value="P:receptor internalization"/>
    <property type="evidence" value="ECO:0000250"/>
    <property type="project" value="UniProtKB"/>
</dbReference>
<dbReference type="GO" id="GO:0090237">
    <property type="term" value="P:regulation of arachidonate secretion"/>
    <property type="evidence" value="ECO:0000250"/>
    <property type="project" value="UniProtKB"/>
</dbReference>
<dbReference type="GO" id="GO:0070372">
    <property type="term" value="P:regulation of ERK1 and ERK2 cascade"/>
    <property type="evidence" value="ECO:0000250"/>
    <property type="project" value="UniProtKB"/>
</dbReference>
<dbReference type="GO" id="GO:0050776">
    <property type="term" value="P:regulation of immune response"/>
    <property type="evidence" value="ECO:0000314"/>
    <property type="project" value="RGD"/>
</dbReference>
<dbReference type="GO" id="GO:0043313">
    <property type="term" value="P:regulation of neutrophil degranulation"/>
    <property type="evidence" value="ECO:0000250"/>
    <property type="project" value="UniProtKB"/>
</dbReference>
<dbReference type="GO" id="GO:0050764">
    <property type="term" value="P:regulation of phagocytosis"/>
    <property type="evidence" value="ECO:0000250"/>
    <property type="project" value="UniProtKB"/>
</dbReference>
<dbReference type="GO" id="GO:0010543">
    <property type="term" value="P:regulation of platelet activation"/>
    <property type="evidence" value="ECO:0000250"/>
    <property type="project" value="UniProtKB"/>
</dbReference>
<dbReference type="GO" id="GO:0090330">
    <property type="term" value="P:regulation of platelet aggregation"/>
    <property type="evidence" value="ECO:0000250"/>
    <property type="project" value="UniProtKB"/>
</dbReference>
<dbReference type="GO" id="GO:0032928">
    <property type="term" value="P:regulation of superoxide anion generation"/>
    <property type="evidence" value="ECO:0000250"/>
    <property type="project" value="UniProtKB"/>
</dbReference>
<dbReference type="GO" id="GO:0010803">
    <property type="term" value="P:regulation of tumor necrosis factor-mediated signaling pathway"/>
    <property type="evidence" value="ECO:0000266"/>
    <property type="project" value="RGD"/>
</dbReference>
<dbReference type="GO" id="GO:0001820">
    <property type="term" value="P:serotonin secretion"/>
    <property type="evidence" value="ECO:0000266"/>
    <property type="project" value="RGD"/>
</dbReference>
<dbReference type="GO" id="GO:0002554">
    <property type="term" value="P:serotonin secretion by platelet"/>
    <property type="evidence" value="ECO:0000250"/>
    <property type="project" value="UniProtKB"/>
</dbReference>
<dbReference type="GO" id="GO:0002223">
    <property type="term" value="P:stimulatory C-type lectin receptor signaling pathway"/>
    <property type="evidence" value="ECO:0000266"/>
    <property type="project" value="RGD"/>
</dbReference>
<dbReference type="CDD" id="cd05116">
    <property type="entry name" value="PTKc_Syk"/>
    <property type="match status" value="1"/>
</dbReference>
<dbReference type="CDD" id="cd10401">
    <property type="entry name" value="SH2_C-SH2_Syk_like"/>
    <property type="match status" value="1"/>
</dbReference>
<dbReference type="CDD" id="cd09938">
    <property type="entry name" value="SH2_N-SH2_Zap70_Syk_like"/>
    <property type="match status" value="1"/>
</dbReference>
<dbReference type="FunFam" id="1.10.930.10:FF:000001">
    <property type="entry name" value="Tyrosine-protein kinase"/>
    <property type="match status" value="1"/>
</dbReference>
<dbReference type="FunFam" id="3.30.200.20:FF:000185">
    <property type="entry name" value="Tyrosine-protein kinase"/>
    <property type="match status" value="1"/>
</dbReference>
<dbReference type="FunFam" id="3.30.505.10:FF:000031">
    <property type="entry name" value="Tyrosine-protein kinase"/>
    <property type="match status" value="1"/>
</dbReference>
<dbReference type="FunFam" id="3.30.505.10:FF:000038">
    <property type="entry name" value="Tyrosine-protein kinase"/>
    <property type="match status" value="1"/>
</dbReference>
<dbReference type="FunFam" id="1.10.510.10:FF:000216">
    <property type="entry name" value="Tyrosine-protein kinase SYK"/>
    <property type="match status" value="1"/>
</dbReference>
<dbReference type="Gene3D" id="3.30.200.20">
    <property type="entry name" value="Phosphorylase Kinase, domain 1"/>
    <property type="match status" value="1"/>
</dbReference>
<dbReference type="Gene3D" id="3.30.505.10">
    <property type="entry name" value="SH2 domain"/>
    <property type="match status" value="2"/>
</dbReference>
<dbReference type="Gene3D" id="1.10.930.10">
    <property type="entry name" value="Syk Kinase, Chain A, domain 2"/>
    <property type="match status" value="1"/>
</dbReference>
<dbReference type="Gene3D" id="1.10.510.10">
    <property type="entry name" value="Transferase(Phosphotransferase) domain 1"/>
    <property type="match status" value="1"/>
</dbReference>
<dbReference type="InterPro" id="IPR011009">
    <property type="entry name" value="Kinase-like_dom_sf"/>
</dbReference>
<dbReference type="InterPro" id="IPR023420">
    <property type="entry name" value="Kinase_SYK/ZAP-70_inter-SH2_sf"/>
</dbReference>
<dbReference type="InterPro" id="IPR050198">
    <property type="entry name" value="Non-receptor_tyrosine_kinases"/>
</dbReference>
<dbReference type="InterPro" id="IPR000719">
    <property type="entry name" value="Prot_kinase_dom"/>
</dbReference>
<dbReference type="InterPro" id="IPR017441">
    <property type="entry name" value="Protein_kinase_ATP_BS"/>
</dbReference>
<dbReference type="InterPro" id="IPR001245">
    <property type="entry name" value="Ser-Thr/Tyr_kinase_cat_dom"/>
</dbReference>
<dbReference type="InterPro" id="IPR000980">
    <property type="entry name" value="SH2"/>
</dbReference>
<dbReference type="InterPro" id="IPR036860">
    <property type="entry name" value="SH2_dom_sf"/>
</dbReference>
<dbReference type="InterPro" id="IPR035838">
    <property type="entry name" value="SYK/ZAP-70_N_SH2"/>
</dbReference>
<dbReference type="InterPro" id="IPR008266">
    <property type="entry name" value="Tyr_kinase_AS"/>
</dbReference>
<dbReference type="InterPro" id="IPR020635">
    <property type="entry name" value="Tyr_kinase_cat_dom"/>
</dbReference>
<dbReference type="InterPro" id="IPR012234">
    <property type="entry name" value="Tyr_kinase_non-rcpt_SYK/ZAP70"/>
</dbReference>
<dbReference type="PANTHER" id="PTHR24418">
    <property type="entry name" value="TYROSINE-PROTEIN KINASE"/>
    <property type="match status" value="1"/>
</dbReference>
<dbReference type="Pfam" id="PF07714">
    <property type="entry name" value="PK_Tyr_Ser-Thr"/>
    <property type="match status" value="1"/>
</dbReference>
<dbReference type="Pfam" id="PF00017">
    <property type="entry name" value="SH2"/>
    <property type="match status" value="2"/>
</dbReference>
<dbReference type="PIRSF" id="PIRSF000604">
    <property type="entry name" value="TyrPK_SYK"/>
    <property type="match status" value="1"/>
</dbReference>
<dbReference type="PRINTS" id="PR00401">
    <property type="entry name" value="SH2DOMAIN"/>
</dbReference>
<dbReference type="PRINTS" id="PR00109">
    <property type="entry name" value="TYRKINASE"/>
</dbReference>
<dbReference type="SMART" id="SM00252">
    <property type="entry name" value="SH2"/>
    <property type="match status" value="2"/>
</dbReference>
<dbReference type="SMART" id="SM00219">
    <property type="entry name" value="TyrKc"/>
    <property type="match status" value="1"/>
</dbReference>
<dbReference type="SUPFAM" id="SSF56112">
    <property type="entry name" value="Protein kinase-like (PK-like)"/>
    <property type="match status" value="1"/>
</dbReference>
<dbReference type="SUPFAM" id="SSF55550">
    <property type="entry name" value="SH2 domain"/>
    <property type="match status" value="2"/>
</dbReference>
<dbReference type="PROSITE" id="PS00107">
    <property type="entry name" value="PROTEIN_KINASE_ATP"/>
    <property type="match status" value="1"/>
</dbReference>
<dbReference type="PROSITE" id="PS50011">
    <property type="entry name" value="PROTEIN_KINASE_DOM"/>
    <property type="match status" value="1"/>
</dbReference>
<dbReference type="PROSITE" id="PS00109">
    <property type="entry name" value="PROTEIN_KINASE_TYR"/>
    <property type="match status" value="1"/>
</dbReference>
<dbReference type="PROSITE" id="PS50001">
    <property type="entry name" value="SH2"/>
    <property type="match status" value="2"/>
</dbReference>
<name>KSYK_RAT</name>
<gene>
    <name type="primary">Syk</name>
</gene>
<feature type="chain" id="PRO_0000088167" description="Tyrosine-protein kinase SYK">
    <location>
        <begin position="1"/>
        <end position="629"/>
    </location>
</feature>
<feature type="domain" description="SH2 1" evidence="5">
    <location>
        <begin position="14"/>
        <end position="106"/>
    </location>
</feature>
<feature type="domain" description="SH2 2" evidence="5">
    <location>
        <begin position="167"/>
        <end position="258"/>
    </location>
</feature>
<feature type="domain" description="Protein kinase" evidence="4">
    <location>
        <begin position="365"/>
        <end position="625"/>
    </location>
</feature>
<feature type="region of interest" description="Interdomain A" evidence="1">
    <location>
        <begin position="107"/>
        <end position="166"/>
    </location>
</feature>
<feature type="region of interest" description="Interdomain B" evidence="1">
    <location>
        <begin position="259"/>
        <end position="364"/>
    </location>
</feature>
<feature type="region of interest" description="Disordered" evidence="7">
    <location>
        <begin position="289"/>
        <end position="330"/>
    </location>
</feature>
<feature type="active site" description="Proton acceptor" evidence="4 6">
    <location>
        <position position="488"/>
    </location>
</feature>
<feature type="binding site" evidence="4">
    <location>
        <begin position="371"/>
        <end position="379"/>
    </location>
    <ligand>
        <name>ATP</name>
        <dbReference type="ChEBI" id="CHEBI:30616"/>
    </ligand>
</feature>
<feature type="binding site" evidence="4">
    <location>
        <position position="396"/>
    </location>
    <ligand>
        <name>ATP</name>
        <dbReference type="ChEBI" id="CHEBI:30616"/>
    </ligand>
</feature>
<feature type="modified residue" description="Phosphotyrosine" evidence="2">
    <location>
        <position position="27"/>
    </location>
</feature>
<feature type="modified residue" description="Phosphoserine" evidence="2">
    <location>
        <position position="43"/>
    </location>
</feature>
<feature type="modified residue" description="Phosphotyrosine" evidence="2">
    <location>
        <position position="46"/>
    </location>
</feature>
<feature type="modified residue" description="Phosphotyrosine" evidence="2">
    <location>
        <position position="130"/>
    </location>
</feature>
<feature type="modified residue" description="Phosphoserine" evidence="2">
    <location>
        <position position="201"/>
    </location>
</feature>
<feature type="modified residue" description="Phosphothreonine" evidence="2">
    <location>
        <position position="255"/>
    </location>
</feature>
<feature type="modified residue" description="Phosphoserine" evidence="3">
    <location>
        <position position="270"/>
    </location>
</feature>
<feature type="modified residue" description="Phosphoserine" evidence="2">
    <location>
        <position position="289"/>
    </location>
</feature>
<feature type="modified residue" description="Phosphotyrosine" evidence="2">
    <location>
        <position position="290"/>
    </location>
</feature>
<feature type="modified residue" description="Phosphoserine" evidence="2">
    <location>
        <position position="291"/>
    </location>
</feature>
<feature type="modified residue" description="Phosphoserine" evidence="2">
    <location>
        <position position="310"/>
    </location>
</feature>
<feature type="modified residue" description="Phosphothreonine" evidence="2">
    <location>
        <position position="311"/>
    </location>
</feature>
<feature type="modified residue" description="Phosphoserine" evidence="2">
    <location>
        <position position="313"/>
    </location>
</feature>
<feature type="modified residue" description="Phosphotyrosine; by LYN" evidence="8">
    <location>
        <position position="317"/>
    </location>
</feature>
<feature type="modified residue" description="Phosphothreonine" evidence="2">
    <location>
        <position position="339"/>
    </location>
</feature>
<feature type="modified residue" description="Phosphotyrosine" evidence="8">
    <location>
        <position position="342"/>
    </location>
</feature>
<feature type="modified residue" description="Phosphoserine" evidence="2">
    <location>
        <position position="344"/>
    </location>
</feature>
<feature type="modified residue" description="Phosphotyrosine" evidence="8">
    <location>
        <position position="346"/>
    </location>
</feature>
<feature type="modified residue" description="Phosphotyrosine" evidence="2">
    <location>
        <position position="358"/>
    </location>
</feature>
<feature type="modified residue" description="Phosphoserine" evidence="2">
    <location>
        <position position="373"/>
    </location>
</feature>
<feature type="modified residue" description="Phosphothreonine" evidence="2">
    <location>
        <position position="378"/>
    </location>
</feature>
<feature type="modified residue" description="Phosphotyrosine" evidence="2">
    <location>
        <position position="478"/>
    </location>
</feature>
<feature type="modified residue" description="Phosphotyrosine" evidence="2">
    <location>
        <position position="501"/>
    </location>
</feature>
<feature type="modified residue" description="Phosphotyrosine; by autocatalysis" evidence="2">
    <location>
        <position position="519"/>
    </location>
</feature>
<feature type="modified residue" description="Phosphotyrosine" evidence="2">
    <location>
        <position position="520"/>
    </location>
</feature>
<feature type="modified residue" description="Phosphothreonine" evidence="2">
    <location>
        <position position="524"/>
    </location>
</feature>
<feature type="modified residue" description="Phosphotyrosine" evidence="3">
    <location>
        <position position="540"/>
    </location>
</feature>
<feature type="modified residue" description="Phosphoserine" evidence="2">
    <location>
        <position position="573"/>
    </location>
</feature>
<feature type="modified residue" description="Phosphothreonine" evidence="2">
    <location>
        <position position="576"/>
    </location>
</feature>
<feature type="modified residue" description="Phosphotyrosine" evidence="2">
    <location>
        <position position="623"/>
    </location>
</feature>
<feature type="modified residue" description="Phosphotyrosine" evidence="2">
    <location>
        <position position="624"/>
    </location>
</feature>
<feature type="modified residue" description="Phosphotyrosine" evidence="2">
    <location>
        <position position="625"/>
    </location>
</feature>
<feature type="splice variant" id="VSP_005011" description="In isoform SykA." evidence="10">
    <location>
        <begin position="277"/>
        <end position="299"/>
    </location>
</feature>
<sequence length="629" mass="71529">MAGNAVDNANHLTYFFGNITREEAEDYLVQGGMTDGLYLLRQSRNYLGGFALSVAHNRKAHHYTIERELNGTYAISGGRAHASPADLCHYHSQEPEGLVCLLKKPFNRPPGVQPKTGPFEDLKENLIREYVKQTWNLQGQALEQAIISQKPQLEKLIATTAHEKMPWFHGNISRDESEQTVLIGSKTNGKFLIRARDNNGSFALCLLHEGKVLHYRIDRDKTGKLSIPEGKKFDTLWQLVEHYSYKPDGLLRVLTVPCQKIGVQMGHPGSSNAHPVTWSPGGIISRIKSYSFPKPGHKKPPPPQGSRPESTVSFNPYEPTGGAWGPDRGLQREALPMDTEVYESPYADPEEIRPKEVYLDRKLLTLEDNELGSGNFGTVKKGYYQMKKVVKTVAVKILKNEANDPALKDELLAEANVMQQLDNPYIVRMIGICEAESWMLVMEMAAWGPLNKYLQQNRHIKDKNIIELVHQVSMGMKYLEESNFVHRDLAARNVLLVTQHYAKISDFGLSKALRADENYYKAQTHGKWPVKWYAPECINYFKFSSKSDVWSFGVLMWEAFSYGQKPYRGMKGSEVTAMLEKGERMGCPPGCPREMYDLMFLCWTYDVENRPGFAAVELRLRNYYYDVVN</sequence>
<accession>Q64725</accession>
<proteinExistence type="evidence at protein level"/>
<evidence type="ECO:0000250" key="1"/>
<evidence type="ECO:0000250" key="2">
    <source>
        <dbReference type="UniProtKB" id="P43405"/>
    </source>
</evidence>
<evidence type="ECO:0000250" key="3">
    <source>
        <dbReference type="UniProtKB" id="P48025"/>
    </source>
</evidence>
<evidence type="ECO:0000255" key="4">
    <source>
        <dbReference type="PROSITE-ProRule" id="PRU00159"/>
    </source>
</evidence>
<evidence type="ECO:0000255" key="5">
    <source>
        <dbReference type="PROSITE-ProRule" id="PRU00191"/>
    </source>
</evidence>
<evidence type="ECO:0000255" key="6">
    <source>
        <dbReference type="PROSITE-ProRule" id="PRU10028"/>
    </source>
</evidence>
<evidence type="ECO:0000256" key="7">
    <source>
        <dbReference type="SAM" id="MobiDB-lite"/>
    </source>
</evidence>
<evidence type="ECO:0000269" key="8">
    <source>
    </source>
</evidence>
<evidence type="ECO:0000269" key="9">
    <source>
    </source>
</evidence>
<evidence type="ECO:0000305" key="10"/>